<comment type="function">
    <text evidence="1">Cell wall formation.</text>
</comment>
<comment type="catalytic activity">
    <reaction evidence="1">
        <text>UDP-N-acetyl-alpha-D-muramate + L-alanine + ATP = UDP-N-acetyl-alpha-D-muramoyl-L-alanine + ADP + phosphate + H(+)</text>
        <dbReference type="Rhea" id="RHEA:23372"/>
        <dbReference type="ChEBI" id="CHEBI:15378"/>
        <dbReference type="ChEBI" id="CHEBI:30616"/>
        <dbReference type="ChEBI" id="CHEBI:43474"/>
        <dbReference type="ChEBI" id="CHEBI:57972"/>
        <dbReference type="ChEBI" id="CHEBI:70757"/>
        <dbReference type="ChEBI" id="CHEBI:83898"/>
        <dbReference type="ChEBI" id="CHEBI:456216"/>
        <dbReference type="EC" id="6.3.2.8"/>
    </reaction>
</comment>
<comment type="pathway">
    <text evidence="1">Cell wall biogenesis; peptidoglycan biosynthesis.</text>
</comment>
<comment type="subcellular location">
    <subcellularLocation>
        <location evidence="1">Cytoplasm</location>
    </subcellularLocation>
</comment>
<comment type="similarity">
    <text evidence="1">Belongs to the MurCDEF family.</text>
</comment>
<feature type="chain" id="PRO_1000192110" description="UDP-N-acetylmuramate--L-alanine ligase">
    <location>
        <begin position="1"/>
        <end position="488"/>
    </location>
</feature>
<feature type="binding site" evidence="1">
    <location>
        <begin position="127"/>
        <end position="133"/>
    </location>
    <ligand>
        <name>ATP</name>
        <dbReference type="ChEBI" id="CHEBI:30616"/>
    </ligand>
</feature>
<reference key="1">
    <citation type="submission" date="2008-12" db="EMBL/GenBank/DDBJ databases">
        <title>Complete sequence of chromosome of Shewanella baltica OS223.</title>
        <authorList>
            <consortium name="US DOE Joint Genome Institute"/>
            <person name="Lucas S."/>
            <person name="Copeland A."/>
            <person name="Lapidus A."/>
            <person name="Glavina del Rio T."/>
            <person name="Dalin E."/>
            <person name="Tice H."/>
            <person name="Bruce D."/>
            <person name="Goodwin L."/>
            <person name="Pitluck S."/>
            <person name="Chertkov O."/>
            <person name="Meincke L."/>
            <person name="Brettin T."/>
            <person name="Detter J.C."/>
            <person name="Han C."/>
            <person name="Kuske C.R."/>
            <person name="Larimer F."/>
            <person name="Land M."/>
            <person name="Hauser L."/>
            <person name="Kyrpides N."/>
            <person name="Ovchinnikova G."/>
            <person name="Brettar I."/>
            <person name="Rodrigues J."/>
            <person name="Konstantinidis K."/>
            <person name="Tiedje J."/>
        </authorList>
    </citation>
    <scope>NUCLEOTIDE SEQUENCE [LARGE SCALE GENOMIC DNA]</scope>
    <source>
        <strain>OS223</strain>
    </source>
</reference>
<accession>B8E699</accession>
<organism>
    <name type="scientific">Shewanella baltica (strain OS223)</name>
    <dbReference type="NCBI Taxonomy" id="407976"/>
    <lineage>
        <taxon>Bacteria</taxon>
        <taxon>Pseudomonadati</taxon>
        <taxon>Pseudomonadota</taxon>
        <taxon>Gammaproteobacteria</taxon>
        <taxon>Alteromonadales</taxon>
        <taxon>Shewanellaceae</taxon>
        <taxon>Shewanella</taxon>
    </lineage>
</organism>
<keyword id="KW-0067">ATP-binding</keyword>
<keyword id="KW-0131">Cell cycle</keyword>
<keyword id="KW-0132">Cell division</keyword>
<keyword id="KW-0133">Cell shape</keyword>
<keyword id="KW-0961">Cell wall biogenesis/degradation</keyword>
<keyword id="KW-0963">Cytoplasm</keyword>
<keyword id="KW-0436">Ligase</keyword>
<keyword id="KW-0547">Nucleotide-binding</keyword>
<keyword id="KW-0573">Peptidoglycan synthesis</keyword>
<protein>
    <recommendedName>
        <fullName evidence="1">UDP-N-acetylmuramate--L-alanine ligase</fullName>
        <ecNumber evidence="1">6.3.2.8</ecNumber>
    </recommendedName>
    <alternativeName>
        <fullName evidence="1">UDP-N-acetylmuramoyl-L-alanine synthetase</fullName>
    </alternativeName>
</protein>
<sequence>MTKTERYAQLRSMIPEMRRIKRIHFVGIGGAGMGGIAEVLVNEGYQVSGSDIAQNAVTDRLCLLGAKIQIGHAAENVQQVDVVVVSTAINLENPEILAAKELRIPIVRRAEMLAELMRYRHGVAIAGTHGKTTTTSLIASVYGQAGRDPTFVIGGLLNSAGTNARLGTSRYLIAEADESDASFLHLQPMVSVVTNIEADHMDTYGGDFEKLKSTFVDFLHNLPFYGVAVVCIDDAVVREIMPRIGRQLVTYGFSDDADVQALNFSQQGHQCRFTVRRKGKADLDLVLNLPGQHNVLNALAAIAVATEDEIDDSAITQALVEFQGIGRRFQHLGKFATPKGEVMLVDDYGHHPSEVAATIKAARAGWPDKRLVMAYQPHRYTRTRDLYEDFVEVLSQVDCLLLLDVYSAGEAPITGADGRALCRSIRLRGQLDPIFIASPDQLAEVLPDVLQEGDLLLTQGAGNIGALSRLLATTELGFAVAELPAQAS</sequence>
<name>MURC_SHEB2</name>
<evidence type="ECO:0000255" key="1">
    <source>
        <dbReference type="HAMAP-Rule" id="MF_00046"/>
    </source>
</evidence>
<proteinExistence type="inferred from homology"/>
<gene>
    <name evidence="1" type="primary">murC</name>
    <name type="ordered locus">Sbal223_0428</name>
</gene>
<dbReference type="EC" id="6.3.2.8" evidence="1"/>
<dbReference type="EMBL" id="CP001252">
    <property type="protein sequence ID" value="ACK44962.1"/>
    <property type="molecule type" value="Genomic_DNA"/>
</dbReference>
<dbReference type="RefSeq" id="WP_006079895.1">
    <property type="nucleotide sequence ID" value="NC_011663.1"/>
</dbReference>
<dbReference type="SMR" id="B8E699"/>
<dbReference type="GeneID" id="11770752"/>
<dbReference type="KEGG" id="sbp:Sbal223_0428"/>
<dbReference type="HOGENOM" id="CLU_028104_2_2_6"/>
<dbReference type="UniPathway" id="UPA00219"/>
<dbReference type="Proteomes" id="UP000002507">
    <property type="component" value="Chromosome"/>
</dbReference>
<dbReference type="GO" id="GO:0005737">
    <property type="term" value="C:cytoplasm"/>
    <property type="evidence" value="ECO:0007669"/>
    <property type="project" value="UniProtKB-SubCell"/>
</dbReference>
<dbReference type="GO" id="GO:0005524">
    <property type="term" value="F:ATP binding"/>
    <property type="evidence" value="ECO:0007669"/>
    <property type="project" value="UniProtKB-UniRule"/>
</dbReference>
<dbReference type="GO" id="GO:0008763">
    <property type="term" value="F:UDP-N-acetylmuramate-L-alanine ligase activity"/>
    <property type="evidence" value="ECO:0007669"/>
    <property type="project" value="UniProtKB-UniRule"/>
</dbReference>
<dbReference type="GO" id="GO:0051301">
    <property type="term" value="P:cell division"/>
    <property type="evidence" value="ECO:0007669"/>
    <property type="project" value="UniProtKB-KW"/>
</dbReference>
<dbReference type="GO" id="GO:0071555">
    <property type="term" value="P:cell wall organization"/>
    <property type="evidence" value="ECO:0007669"/>
    <property type="project" value="UniProtKB-KW"/>
</dbReference>
<dbReference type="GO" id="GO:0009252">
    <property type="term" value="P:peptidoglycan biosynthetic process"/>
    <property type="evidence" value="ECO:0007669"/>
    <property type="project" value="UniProtKB-UniRule"/>
</dbReference>
<dbReference type="GO" id="GO:0008360">
    <property type="term" value="P:regulation of cell shape"/>
    <property type="evidence" value="ECO:0007669"/>
    <property type="project" value="UniProtKB-KW"/>
</dbReference>
<dbReference type="FunFam" id="3.40.1190.10:FF:000001">
    <property type="entry name" value="UDP-N-acetylmuramate--L-alanine ligase"/>
    <property type="match status" value="1"/>
</dbReference>
<dbReference type="FunFam" id="3.40.50.720:FF:000046">
    <property type="entry name" value="UDP-N-acetylmuramate--L-alanine ligase"/>
    <property type="match status" value="1"/>
</dbReference>
<dbReference type="Gene3D" id="3.90.190.20">
    <property type="entry name" value="Mur ligase, C-terminal domain"/>
    <property type="match status" value="1"/>
</dbReference>
<dbReference type="Gene3D" id="3.40.1190.10">
    <property type="entry name" value="Mur-like, catalytic domain"/>
    <property type="match status" value="1"/>
</dbReference>
<dbReference type="Gene3D" id="3.40.50.720">
    <property type="entry name" value="NAD(P)-binding Rossmann-like Domain"/>
    <property type="match status" value="1"/>
</dbReference>
<dbReference type="HAMAP" id="MF_00046">
    <property type="entry name" value="MurC"/>
    <property type="match status" value="1"/>
</dbReference>
<dbReference type="InterPro" id="IPR036565">
    <property type="entry name" value="Mur-like_cat_sf"/>
</dbReference>
<dbReference type="InterPro" id="IPR004101">
    <property type="entry name" value="Mur_ligase_C"/>
</dbReference>
<dbReference type="InterPro" id="IPR036615">
    <property type="entry name" value="Mur_ligase_C_dom_sf"/>
</dbReference>
<dbReference type="InterPro" id="IPR013221">
    <property type="entry name" value="Mur_ligase_cen"/>
</dbReference>
<dbReference type="InterPro" id="IPR000713">
    <property type="entry name" value="Mur_ligase_N"/>
</dbReference>
<dbReference type="InterPro" id="IPR050061">
    <property type="entry name" value="MurCDEF_pg_biosynth"/>
</dbReference>
<dbReference type="InterPro" id="IPR005758">
    <property type="entry name" value="UDP-N-AcMur_Ala_ligase_MurC"/>
</dbReference>
<dbReference type="NCBIfam" id="TIGR01082">
    <property type="entry name" value="murC"/>
    <property type="match status" value="1"/>
</dbReference>
<dbReference type="PANTHER" id="PTHR43445:SF3">
    <property type="entry name" value="UDP-N-ACETYLMURAMATE--L-ALANINE LIGASE"/>
    <property type="match status" value="1"/>
</dbReference>
<dbReference type="PANTHER" id="PTHR43445">
    <property type="entry name" value="UDP-N-ACETYLMURAMATE--L-ALANINE LIGASE-RELATED"/>
    <property type="match status" value="1"/>
</dbReference>
<dbReference type="Pfam" id="PF01225">
    <property type="entry name" value="Mur_ligase"/>
    <property type="match status" value="1"/>
</dbReference>
<dbReference type="Pfam" id="PF02875">
    <property type="entry name" value="Mur_ligase_C"/>
    <property type="match status" value="1"/>
</dbReference>
<dbReference type="Pfam" id="PF08245">
    <property type="entry name" value="Mur_ligase_M"/>
    <property type="match status" value="1"/>
</dbReference>
<dbReference type="SUPFAM" id="SSF51984">
    <property type="entry name" value="MurCD N-terminal domain"/>
    <property type="match status" value="1"/>
</dbReference>
<dbReference type="SUPFAM" id="SSF53623">
    <property type="entry name" value="MurD-like peptide ligases, catalytic domain"/>
    <property type="match status" value="1"/>
</dbReference>
<dbReference type="SUPFAM" id="SSF53244">
    <property type="entry name" value="MurD-like peptide ligases, peptide-binding domain"/>
    <property type="match status" value="1"/>
</dbReference>